<organism>
    <name type="scientific">Rotavirus C (strain RVC/Pig/United States/Cowden/1980)</name>
    <name type="common">RV-C</name>
    <dbReference type="NCBI Taxonomy" id="10916"/>
    <lineage>
        <taxon>Viruses</taxon>
        <taxon>Riboviria</taxon>
        <taxon>Orthornavirae</taxon>
        <taxon>Duplornaviricota</taxon>
        <taxon>Resentoviricetes</taxon>
        <taxon>Reovirales</taxon>
        <taxon>Sedoreoviridae</taxon>
        <taxon>Rotavirus</taxon>
        <taxon>Rotavirus C</taxon>
    </lineage>
</organism>
<evidence type="ECO:0000255" key="1">
    <source>
        <dbReference type="HAMAP-Rule" id="MF_04124"/>
    </source>
</evidence>
<accession>P26192</accession>
<dbReference type="EC" id="2.7.7.50" evidence="1"/>
<dbReference type="EC" id="2.1.1.56" evidence="1"/>
<dbReference type="EMBL" id="M74219">
    <property type="protein sequence ID" value="AAA99239.1"/>
    <property type="molecule type" value="Genomic_DNA"/>
</dbReference>
<dbReference type="PIR" id="C40822">
    <property type="entry name" value="P3XRPC"/>
</dbReference>
<dbReference type="SMR" id="P26192"/>
<dbReference type="Proteomes" id="UP000008175">
    <property type="component" value="Genome"/>
</dbReference>
<dbReference type="GO" id="GO:0019013">
    <property type="term" value="C:viral nucleocapsid"/>
    <property type="evidence" value="ECO:0007669"/>
    <property type="project" value="UniProtKB-UniRule"/>
</dbReference>
<dbReference type="GO" id="GO:0005525">
    <property type="term" value="F:GTP binding"/>
    <property type="evidence" value="ECO:0007669"/>
    <property type="project" value="UniProtKB-UniRule"/>
</dbReference>
<dbReference type="GO" id="GO:0004482">
    <property type="term" value="F:mRNA 5'-cap (guanine-N7-)-methyltransferase activity"/>
    <property type="evidence" value="ECO:0007669"/>
    <property type="project" value="UniProtKB-UniRule"/>
</dbReference>
<dbReference type="GO" id="GO:0004484">
    <property type="term" value="F:mRNA guanylyltransferase activity"/>
    <property type="evidence" value="ECO:0007669"/>
    <property type="project" value="UniProtKB-UniRule"/>
</dbReference>
<dbReference type="GO" id="GO:0003723">
    <property type="term" value="F:RNA binding"/>
    <property type="evidence" value="ECO:0007669"/>
    <property type="project" value="UniProtKB-UniRule"/>
</dbReference>
<dbReference type="GO" id="GO:0016032">
    <property type="term" value="P:viral process"/>
    <property type="evidence" value="ECO:0007669"/>
    <property type="project" value="UniProtKB-UniRule"/>
</dbReference>
<dbReference type="CDD" id="cd20757">
    <property type="entry name" value="capping_2-OMTase_Rotavirus"/>
    <property type="match status" value="1"/>
</dbReference>
<dbReference type="HAMAP" id="MF_04124">
    <property type="entry name" value="Rota_VP3"/>
    <property type="match status" value="1"/>
</dbReference>
<dbReference type="InterPro" id="IPR011181">
    <property type="entry name" value="VP3_Rotav"/>
</dbReference>
<dbReference type="Pfam" id="PF06929">
    <property type="entry name" value="Rotavirus_VP3"/>
    <property type="match status" value="1"/>
</dbReference>
<dbReference type="PROSITE" id="PS51589">
    <property type="entry name" value="SAM_MT56_VP3"/>
    <property type="match status" value="1"/>
</dbReference>
<protein>
    <recommendedName>
        <fullName evidence="1">Protein VP3</fullName>
    </recommendedName>
    <domain>
        <recommendedName>
            <fullName evidence="1">mRNA guanylyltransferase</fullName>
            <ecNumber evidence="1">2.7.7.50</ecNumber>
        </recommendedName>
    </domain>
    <domain>
        <recommendedName>
            <fullName evidence="1">mRNA (guanine-N(7))-methyltransferase</fullName>
            <ecNumber evidence="1">2.1.1.56</ecNumber>
        </recommendedName>
    </domain>
</protein>
<comment type="function">
    <text evidence="1">Multifunctional enzyme involved in mRNA capping. Catalyzes the formation of the 5' cap structure on the viral plus-strand transcripts. Specifically binds to GTP and displays guanylyltransferase and methyltransferase activities. Has affinity for ssRNA but not for dsRNA. Capping activity is non-specific and caps RNAs that initiate with either a G or an A residue. Together with VP1 polymerase, forms a VP1-VP3 complex positioned near the channels situated at each of the five-fold vertices of the core. Following infection, the outermost layer of the virus is lost, leaving a double-layered particle (DLP) made up of the core and VP6 shell. VP1 then catalyzes the transcription of fully conservative plus-strand genomic RNAs that are capped by VP3 and extruded through the DLP's channels into the cytoplasm where they function as mRNAs for translation of viral proteins. DLPs probably have an RNA triphosphatase activity as well, whereas open cores do not.</text>
</comment>
<comment type="catalytic activity">
    <reaction evidence="1">
        <text>a 5'-end diphospho-ribonucleoside in mRNA + GTP + H(+) = a 5'-end (5'-triphosphoguanosine)-ribonucleoside in mRNA + diphosphate</text>
        <dbReference type="Rhea" id="RHEA:67012"/>
        <dbReference type="Rhea" id="RHEA-COMP:17165"/>
        <dbReference type="Rhea" id="RHEA-COMP:17166"/>
        <dbReference type="ChEBI" id="CHEBI:15378"/>
        <dbReference type="ChEBI" id="CHEBI:33019"/>
        <dbReference type="ChEBI" id="CHEBI:37565"/>
        <dbReference type="ChEBI" id="CHEBI:167616"/>
        <dbReference type="ChEBI" id="CHEBI:167617"/>
        <dbReference type="EC" id="2.7.7.50"/>
    </reaction>
</comment>
<comment type="catalytic activity">
    <reaction evidence="1">
        <text>a 5'-end (5'-triphosphoguanosine)-ribonucleoside in mRNA + S-adenosyl-L-methionine = a 5'-end (N(7)-methyl 5'-triphosphoguanosine)-ribonucleoside in mRNA + S-adenosyl-L-homocysteine</text>
        <dbReference type="Rhea" id="RHEA:67008"/>
        <dbReference type="Rhea" id="RHEA-COMP:17166"/>
        <dbReference type="Rhea" id="RHEA-COMP:17167"/>
        <dbReference type="ChEBI" id="CHEBI:57856"/>
        <dbReference type="ChEBI" id="CHEBI:59789"/>
        <dbReference type="ChEBI" id="CHEBI:156461"/>
        <dbReference type="ChEBI" id="CHEBI:167617"/>
        <dbReference type="EC" id="2.1.1.56"/>
    </reaction>
</comment>
<comment type="subunit">
    <text evidence="1">Interacts with VP1. Interacts with VP2.</text>
</comment>
<comment type="subcellular location">
    <subcellularLocation>
        <location evidence="1">Virion</location>
    </subcellularLocation>
    <text evidence="1">Attached inside the inner capsid as a minor component. There are about 11 to 12 copies per virion.</text>
</comment>
<comment type="similarity">
    <text evidence="1">Belongs to the rotavirus VP3 family.</text>
</comment>
<reference key="1">
    <citation type="journal article" date="1992" name="Virology">
        <title>Sequences of the four larger proteins of a porcine group C rotavirus and comparison with the equivalent group A rotavirus proteins.</title>
        <authorList>
            <person name="Bremont M."/>
            <person name="Juste-Lesage P."/>
            <person name="Chabanne-Vautherot D."/>
            <person name="Charpilienne A."/>
            <person name="Cohen J."/>
        </authorList>
    </citation>
    <scope>NUCLEOTIDE SEQUENCE [GENOMIC DNA]</scope>
</reference>
<sequence>MRVLGLFERGNNLNFADTYIYTWNKQYSYHENAFLISNQVATTIIIYLSDTIVNEVDKAFTLLNSNGIPALVIRKDHIGIFTSSNFTYDWQHKIVYFHEYTYYKNNEFIVSDEFWLHTNIHELLPYKLLYYERGMRKLYDGEEYTLYNTATDDDILYKYIYEKDAIMSGDDYSELYDDKNFRNFVHFMRLLRMRFAVPFDQLSNRVTRSRAFFKSKIHIGLRNESIPQALDNINSQWINYSANGIMISELKGSGSYSEKRISEFDIGQFKNYMNFLTLMFYIKNMKKRPSCTIIGAAPGYWIPSMKRYFTIITYDDKIVDSTEHHNRYFSEEDITKVRTNGVYIDVRSDFDKSDWKKRRQLVEEETKRWLEISYRLLEGKYVEAVLLKMTAMDIEIPDGYFVHFPTTYRKSEYYLLIDKQIIKKQKVKVTKSLMYNAINTIYSDNVFISGKYTLRGKTEGVVALYCLSNTINQKDKVIQYANSFSGTCMTVRLNNTYEVNKVINLNNADYTFLPSDFVCPVNTVLTSYRGYAGVFGYAITKDLKSDGNNHIYIIPNARDENNFDTFASHLGLSRYSHSKRFSESATTMSGYLFRDMVSGKEDMGDTDKANYASGHVFNAIAHYRFDYTYDIVGWLRLHKNKQFRVKSDIYEEHTSDEVRNAIEAAYTYYLLDGDRVGKEYAKKIMEIWEAQV</sequence>
<keyword id="KW-0342">GTP-binding</keyword>
<keyword id="KW-0945">Host-virus interaction</keyword>
<keyword id="KW-0489">Methyltransferase</keyword>
<keyword id="KW-0506">mRNA capping</keyword>
<keyword id="KW-0507">mRNA processing</keyword>
<keyword id="KW-0511">Multifunctional enzyme</keyword>
<keyword id="KW-0547">Nucleotide-binding</keyword>
<keyword id="KW-0548">Nucleotidyltransferase</keyword>
<keyword id="KW-0694">RNA-binding</keyword>
<keyword id="KW-0949">S-adenosyl-L-methionine</keyword>
<keyword id="KW-0808">Transferase</keyword>
<keyword id="KW-0899">Viral immunoevasion</keyword>
<keyword id="KW-0946">Virion</keyword>
<name>VP3_ROTPC</name>
<organismHost>
    <name type="scientific">Sus scrofa</name>
    <name type="common">Pig</name>
    <dbReference type="NCBI Taxonomy" id="9823"/>
</organismHost>
<proteinExistence type="inferred from homology"/>
<feature type="chain" id="PRO_0000149536" description="Protein VP3">
    <location>
        <begin position="1"/>
        <end position="692"/>
    </location>
</feature>
<feature type="region of interest" description="N7-methyltransferase activity" evidence="1">
    <location>
        <begin position="187"/>
        <end position="255"/>
    </location>
</feature>
<feature type="region of interest" description="2'-O-methyltransferase activity" evidence="1">
    <location>
        <begin position="256"/>
        <end position="432"/>
    </location>
</feature>
<feature type="region of interest" description="N7-methyltransferase activity" evidence="1">
    <location>
        <begin position="433"/>
        <end position="558"/>
    </location>
</feature>
<feature type="region of interest" description="GTase/RTPase activity" evidence="1">
    <location>
        <begin position="559"/>
        <end position="692"/>
    </location>
</feature>